<comment type="function">
    <text evidence="1">Regulates the transcription of the pyrimidine nucleotide (pyr) operon in response to exogenous pyrimidines.</text>
</comment>
<comment type="function">
    <text evidence="1">Also displays a weak uracil phosphoribosyltransferase activity which is not physiologically significant.</text>
</comment>
<comment type="catalytic activity">
    <reaction evidence="1">
        <text>UMP + diphosphate = 5-phospho-alpha-D-ribose 1-diphosphate + uracil</text>
        <dbReference type="Rhea" id="RHEA:13017"/>
        <dbReference type="ChEBI" id="CHEBI:17568"/>
        <dbReference type="ChEBI" id="CHEBI:33019"/>
        <dbReference type="ChEBI" id="CHEBI:57865"/>
        <dbReference type="ChEBI" id="CHEBI:58017"/>
        <dbReference type="EC" id="2.4.2.9"/>
    </reaction>
</comment>
<comment type="similarity">
    <text evidence="1">Belongs to the purine/pyrimidine phosphoribosyltransferase family. PyrR subfamily.</text>
</comment>
<reference key="1">
    <citation type="journal article" date="2007" name="Genome Biol.">
        <title>Characterization and modeling of the Haemophilus influenzae core and supragenomes based on the complete genomic sequences of Rd and 12 clinical nontypeable strains.</title>
        <authorList>
            <person name="Hogg J.S."/>
            <person name="Hu F.Z."/>
            <person name="Janto B."/>
            <person name="Boissy R."/>
            <person name="Hayes J."/>
            <person name="Keefe R."/>
            <person name="Post J.C."/>
            <person name="Ehrlich G.D."/>
        </authorList>
    </citation>
    <scope>NUCLEOTIDE SEQUENCE [LARGE SCALE GENOMIC DNA]</scope>
    <source>
        <strain>PittGG</strain>
    </source>
</reference>
<evidence type="ECO:0000255" key="1">
    <source>
        <dbReference type="HAMAP-Rule" id="MF_01219"/>
    </source>
</evidence>
<dbReference type="EC" id="2.4.2.9" evidence="1"/>
<dbReference type="EMBL" id="CP000672">
    <property type="protein sequence ID" value="ABR00026.1"/>
    <property type="molecule type" value="Genomic_DNA"/>
</dbReference>
<dbReference type="SMR" id="A5UGX0"/>
<dbReference type="KEGG" id="hiq:CGSHiGG_05535"/>
<dbReference type="HOGENOM" id="CLU_094234_2_1_6"/>
<dbReference type="Proteomes" id="UP000001990">
    <property type="component" value="Chromosome"/>
</dbReference>
<dbReference type="GO" id="GO:0004845">
    <property type="term" value="F:uracil phosphoribosyltransferase activity"/>
    <property type="evidence" value="ECO:0007669"/>
    <property type="project" value="UniProtKB-UniRule"/>
</dbReference>
<dbReference type="GO" id="GO:0006355">
    <property type="term" value="P:regulation of DNA-templated transcription"/>
    <property type="evidence" value="ECO:0007669"/>
    <property type="project" value="UniProtKB-UniRule"/>
</dbReference>
<dbReference type="CDD" id="cd06223">
    <property type="entry name" value="PRTases_typeI"/>
    <property type="match status" value="1"/>
</dbReference>
<dbReference type="FunFam" id="3.40.50.2020:FF:000020">
    <property type="entry name" value="Bifunctional protein PyrR"/>
    <property type="match status" value="1"/>
</dbReference>
<dbReference type="Gene3D" id="3.40.50.2020">
    <property type="match status" value="1"/>
</dbReference>
<dbReference type="HAMAP" id="MF_01219">
    <property type="entry name" value="PyrR"/>
    <property type="match status" value="1"/>
</dbReference>
<dbReference type="InterPro" id="IPR000836">
    <property type="entry name" value="PRibTrfase_dom"/>
</dbReference>
<dbReference type="InterPro" id="IPR029057">
    <property type="entry name" value="PRTase-like"/>
</dbReference>
<dbReference type="InterPro" id="IPR023050">
    <property type="entry name" value="PyrR"/>
</dbReference>
<dbReference type="InterPro" id="IPR050137">
    <property type="entry name" value="PyrR_bifunctional"/>
</dbReference>
<dbReference type="NCBIfam" id="NF003549">
    <property type="entry name" value="PRK05205.1-5"/>
    <property type="match status" value="1"/>
</dbReference>
<dbReference type="PANTHER" id="PTHR11608">
    <property type="entry name" value="BIFUNCTIONAL PROTEIN PYRR"/>
    <property type="match status" value="1"/>
</dbReference>
<dbReference type="PANTHER" id="PTHR11608:SF0">
    <property type="entry name" value="BIFUNCTIONAL PROTEIN PYRR"/>
    <property type="match status" value="1"/>
</dbReference>
<dbReference type="Pfam" id="PF00156">
    <property type="entry name" value="Pribosyltran"/>
    <property type="match status" value="1"/>
</dbReference>
<dbReference type="SUPFAM" id="SSF53271">
    <property type="entry name" value="PRTase-like"/>
    <property type="match status" value="1"/>
</dbReference>
<gene>
    <name evidence="1" type="primary">pyrR</name>
    <name type="ordered locus">CGSHiGG_05535</name>
</gene>
<protein>
    <recommendedName>
        <fullName evidence="1">Bifunctional protein PyrR</fullName>
    </recommendedName>
    <domain>
        <recommendedName>
            <fullName evidence="1">Pyrimidine operon regulatory protein</fullName>
        </recommendedName>
    </domain>
    <domain>
        <recommendedName>
            <fullName evidence="1">Uracil phosphoribosyltransferase</fullName>
            <shortName evidence="1">UPRTase</shortName>
            <ecNumber evidence="1">2.4.2.9</ecNumber>
        </recommendedName>
    </domain>
</protein>
<organism>
    <name type="scientific">Haemophilus influenzae (strain PittGG)</name>
    <dbReference type="NCBI Taxonomy" id="374931"/>
    <lineage>
        <taxon>Bacteria</taxon>
        <taxon>Pseudomonadati</taxon>
        <taxon>Pseudomonadota</taxon>
        <taxon>Gammaproteobacteria</taxon>
        <taxon>Pasteurellales</taxon>
        <taxon>Pasteurellaceae</taxon>
        <taxon>Haemophilus</taxon>
    </lineage>
</organism>
<feature type="chain" id="PRO_1000053839" description="Bifunctional protein PyrR">
    <location>
        <begin position="1"/>
        <end position="179"/>
    </location>
</feature>
<feature type="short sequence motif" description="PRPP-binding" evidence="1">
    <location>
        <begin position="100"/>
        <end position="112"/>
    </location>
</feature>
<keyword id="KW-0328">Glycosyltransferase</keyword>
<keyword id="KW-0804">Transcription</keyword>
<keyword id="KW-0805">Transcription regulation</keyword>
<keyword id="KW-0808">Transferase</keyword>
<accession>A5UGX0</accession>
<sequence length="179" mass="20498">MEKIIIDHDRFLRTISRISHEIIEKHQTLDDLVIVGIKRRGAEIAELLQRRVEELSGINLPSMELDITFYRDDLTLVDQEDKMPVYSGSSQYLNIQDKTVILVDDVLFTGRTIRAAMDALTDFGRAAKIELVIFVDRGHRELPIRADYVGKNVPTSRDELVQVRTEKQDGCYEVAILGK</sequence>
<name>PYRR_HAEIG</name>
<proteinExistence type="inferred from homology"/>